<proteinExistence type="inferred from homology"/>
<gene>
    <name evidence="1" type="primary">nrdR</name>
    <name type="ordered locus">Spea_1161</name>
</gene>
<organism>
    <name type="scientific">Shewanella pealeana (strain ATCC 700345 / ANG-SQ1)</name>
    <dbReference type="NCBI Taxonomy" id="398579"/>
    <lineage>
        <taxon>Bacteria</taxon>
        <taxon>Pseudomonadati</taxon>
        <taxon>Pseudomonadota</taxon>
        <taxon>Gammaproteobacteria</taxon>
        <taxon>Alteromonadales</taxon>
        <taxon>Shewanellaceae</taxon>
        <taxon>Shewanella</taxon>
    </lineage>
</organism>
<keyword id="KW-0067">ATP-binding</keyword>
<keyword id="KW-0238">DNA-binding</keyword>
<keyword id="KW-0479">Metal-binding</keyword>
<keyword id="KW-0547">Nucleotide-binding</keyword>
<keyword id="KW-1185">Reference proteome</keyword>
<keyword id="KW-0678">Repressor</keyword>
<keyword id="KW-0804">Transcription</keyword>
<keyword id="KW-0805">Transcription regulation</keyword>
<keyword id="KW-0862">Zinc</keyword>
<keyword id="KW-0863">Zinc-finger</keyword>
<dbReference type="EMBL" id="CP000851">
    <property type="protein sequence ID" value="ABV86488.1"/>
    <property type="molecule type" value="Genomic_DNA"/>
</dbReference>
<dbReference type="RefSeq" id="WP_012154416.1">
    <property type="nucleotide sequence ID" value="NC_009901.1"/>
</dbReference>
<dbReference type="SMR" id="A8H1Q1"/>
<dbReference type="STRING" id="398579.Spea_1161"/>
<dbReference type="KEGG" id="spl:Spea_1161"/>
<dbReference type="eggNOG" id="COG1327">
    <property type="taxonomic scope" value="Bacteria"/>
</dbReference>
<dbReference type="HOGENOM" id="CLU_108412_0_0_6"/>
<dbReference type="OrthoDB" id="9807461at2"/>
<dbReference type="Proteomes" id="UP000002608">
    <property type="component" value="Chromosome"/>
</dbReference>
<dbReference type="GO" id="GO:0005524">
    <property type="term" value="F:ATP binding"/>
    <property type="evidence" value="ECO:0007669"/>
    <property type="project" value="UniProtKB-KW"/>
</dbReference>
<dbReference type="GO" id="GO:0003677">
    <property type="term" value="F:DNA binding"/>
    <property type="evidence" value="ECO:0007669"/>
    <property type="project" value="UniProtKB-KW"/>
</dbReference>
<dbReference type="GO" id="GO:0008270">
    <property type="term" value="F:zinc ion binding"/>
    <property type="evidence" value="ECO:0007669"/>
    <property type="project" value="UniProtKB-UniRule"/>
</dbReference>
<dbReference type="GO" id="GO:0045892">
    <property type="term" value="P:negative regulation of DNA-templated transcription"/>
    <property type="evidence" value="ECO:0007669"/>
    <property type="project" value="UniProtKB-UniRule"/>
</dbReference>
<dbReference type="HAMAP" id="MF_00440">
    <property type="entry name" value="NrdR"/>
    <property type="match status" value="1"/>
</dbReference>
<dbReference type="InterPro" id="IPR005144">
    <property type="entry name" value="ATP-cone_dom"/>
</dbReference>
<dbReference type="InterPro" id="IPR055173">
    <property type="entry name" value="NrdR-like_N"/>
</dbReference>
<dbReference type="InterPro" id="IPR003796">
    <property type="entry name" value="RNR_NrdR-like"/>
</dbReference>
<dbReference type="NCBIfam" id="TIGR00244">
    <property type="entry name" value="transcriptional regulator NrdR"/>
    <property type="match status" value="1"/>
</dbReference>
<dbReference type="PANTHER" id="PTHR30455">
    <property type="entry name" value="TRANSCRIPTIONAL REPRESSOR NRDR"/>
    <property type="match status" value="1"/>
</dbReference>
<dbReference type="PANTHER" id="PTHR30455:SF2">
    <property type="entry name" value="TRANSCRIPTIONAL REPRESSOR NRDR"/>
    <property type="match status" value="1"/>
</dbReference>
<dbReference type="Pfam" id="PF03477">
    <property type="entry name" value="ATP-cone"/>
    <property type="match status" value="1"/>
</dbReference>
<dbReference type="Pfam" id="PF22811">
    <property type="entry name" value="Zn_ribbon_NrdR"/>
    <property type="match status" value="1"/>
</dbReference>
<dbReference type="PROSITE" id="PS51161">
    <property type="entry name" value="ATP_CONE"/>
    <property type="match status" value="1"/>
</dbReference>
<protein>
    <recommendedName>
        <fullName evidence="1">Transcriptional repressor NrdR</fullName>
    </recommendedName>
</protein>
<accession>A8H1Q1</accession>
<evidence type="ECO:0000255" key="1">
    <source>
        <dbReference type="HAMAP-Rule" id="MF_00440"/>
    </source>
</evidence>
<sequence length="149" mass="17068">MHCPFCSATDTKVIDSRLVADGHQVRRRRECVQCHERFTTFEGAELVMPRVVKQDGSRQPFDEEKLRGGMLRAVEKRPVSMDQIEQALTKIKSTLRATGEREVKSEMIGNLMMDQLVNLDKVAYIRFASVYRAFEDVSEFGEAIAKLQK</sequence>
<feature type="chain" id="PRO_1000080827" description="Transcriptional repressor NrdR">
    <location>
        <begin position="1"/>
        <end position="149"/>
    </location>
</feature>
<feature type="domain" description="ATP-cone" evidence="1">
    <location>
        <begin position="49"/>
        <end position="139"/>
    </location>
</feature>
<feature type="zinc finger region" evidence="1">
    <location>
        <begin position="3"/>
        <end position="34"/>
    </location>
</feature>
<name>NRDR_SHEPA</name>
<comment type="function">
    <text evidence="1">Negatively regulates transcription of bacterial ribonucleotide reductase nrd genes and operons by binding to NrdR-boxes.</text>
</comment>
<comment type="cofactor">
    <cofactor evidence="1">
        <name>Zn(2+)</name>
        <dbReference type="ChEBI" id="CHEBI:29105"/>
    </cofactor>
    <text evidence="1">Binds 1 zinc ion.</text>
</comment>
<comment type="similarity">
    <text evidence="1">Belongs to the NrdR family.</text>
</comment>
<reference key="1">
    <citation type="submission" date="2007-10" db="EMBL/GenBank/DDBJ databases">
        <title>Complete sequence of Shewanella pealeana ATCC 700345.</title>
        <authorList>
            <consortium name="US DOE Joint Genome Institute"/>
            <person name="Copeland A."/>
            <person name="Lucas S."/>
            <person name="Lapidus A."/>
            <person name="Barry K."/>
            <person name="Glavina del Rio T."/>
            <person name="Dalin E."/>
            <person name="Tice H."/>
            <person name="Pitluck S."/>
            <person name="Chertkov O."/>
            <person name="Brettin T."/>
            <person name="Bruce D."/>
            <person name="Detter J.C."/>
            <person name="Han C."/>
            <person name="Schmutz J."/>
            <person name="Larimer F."/>
            <person name="Land M."/>
            <person name="Hauser L."/>
            <person name="Kyrpides N."/>
            <person name="Kim E."/>
            <person name="Zhao J.-S.Z."/>
            <person name="Manno D."/>
            <person name="Hawari J."/>
            <person name="Richardson P."/>
        </authorList>
    </citation>
    <scope>NUCLEOTIDE SEQUENCE [LARGE SCALE GENOMIC DNA]</scope>
    <source>
        <strain>ATCC 700345 / ANG-SQ1</strain>
    </source>
</reference>